<evidence type="ECO:0000269" key="1">
    <source>
    </source>
</evidence>
<evidence type="ECO:0000305" key="2"/>
<evidence type="ECO:0007829" key="3">
    <source>
        <dbReference type="PDB" id="1KLX"/>
    </source>
</evidence>
<proteinExistence type="evidence at protein level"/>
<feature type="chain" id="PRO_0000221379" description="Beta-lactamase HcpB">
    <location>
        <begin position="1"/>
        <end position="138"/>
    </location>
</feature>
<feature type="repeat" description="TPR 1">
    <location>
        <begin position="1"/>
        <end position="28"/>
    </location>
</feature>
<feature type="repeat" description="TPR 2">
    <location>
        <begin position="57"/>
        <end position="94"/>
    </location>
</feature>
<feature type="repeat" description="TPR 3">
    <location>
        <begin position="97"/>
        <end position="130"/>
    </location>
</feature>
<feature type="disulfide bond" evidence="1">
    <location>
        <begin position="22"/>
        <end position="30"/>
    </location>
</feature>
<feature type="disulfide bond" evidence="1">
    <location>
        <begin position="52"/>
        <end position="60"/>
    </location>
</feature>
<feature type="disulfide bond" evidence="1">
    <location>
        <begin position="88"/>
        <end position="96"/>
    </location>
</feature>
<feature type="disulfide bond" evidence="1">
    <location>
        <begin position="124"/>
        <end position="132"/>
    </location>
</feature>
<feature type="helix" evidence="3">
    <location>
        <begin position="7"/>
        <end position="23"/>
    </location>
</feature>
<feature type="helix" evidence="3">
    <location>
        <begin position="29"/>
        <end position="34"/>
    </location>
</feature>
<feature type="helix" evidence="3">
    <location>
        <begin position="41"/>
        <end position="53"/>
    </location>
</feature>
<feature type="helix" evidence="3">
    <location>
        <begin position="57"/>
        <end position="69"/>
    </location>
</feature>
<feature type="strand" evidence="3">
    <location>
        <begin position="71"/>
        <end position="73"/>
    </location>
</feature>
<feature type="helix" evidence="3">
    <location>
        <begin position="77"/>
        <end position="89"/>
    </location>
</feature>
<feature type="helix" evidence="3">
    <location>
        <begin position="93"/>
        <end position="105"/>
    </location>
</feature>
<feature type="strand" evidence="3">
    <location>
        <begin position="107"/>
        <end position="109"/>
    </location>
</feature>
<feature type="helix" evidence="3">
    <location>
        <begin position="113"/>
        <end position="125"/>
    </location>
</feature>
<feature type="helix" evidence="3">
    <location>
        <begin position="129"/>
        <end position="134"/>
    </location>
</feature>
<reference key="1">
    <citation type="journal article" date="1997" name="Nature">
        <title>The complete genome sequence of the gastric pathogen Helicobacter pylori.</title>
        <authorList>
            <person name="Tomb J.-F."/>
            <person name="White O."/>
            <person name="Kerlavage A.R."/>
            <person name="Clayton R.A."/>
            <person name="Sutton G.G."/>
            <person name="Fleischmann R.D."/>
            <person name="Ketchum K.A."/>
            <person name="Klenk H.-P."/>
            <person name="Gill S.R."/>
            <person name="Dougherty B.A."/>
            <person name="Nelson K.E."/>
            <person name="Quackenbush J."/>
            <person name="Zhou L."/>
            <person name="Kirkness E.F."/>
            <person name="Peterson S.N."/>
            <person name="Loftus B.J."/>
            <person name="Richardson D.L."/>
            <person name="Dodson R.J."/>
            <person name="Khalak H.G."/>
            <person name="Glodek A."/>
            <person name="McKenney K."/>
            <person name="FitzGerald L.M."/>
            <person name="Lee N."/>
            <person name="Adams M.D."/>
            <person name="Hickey E.K."/>
            <person name="Berg D.E."/>
            <person name="Gocayne J.D."/>
            <person name="Utterback T.R."/>
            <person name="Peterson J.D."/>
            <person name="Kelley J.M."/>
            <person name="Cotton M.D."/>
            <person name="Weidman J.F."/>
            <person name="Fujii C."/>
            <person name="Bowman C."/>
            <person name="Watthey L."/>
            <person name="Wallin E."/>
            <person name="Hayes W.S."/>
            <person name="Borodovsky M."/>
            <person name="Karp P.D."/>
            <person name="Smith H.O."/>
            <person name="Fraser C.M."/>
            <person name="Venter J.C."/>
        </authorList>
    </citation>
    <scope>NUCLEOTIDE SEQUENCE [LARGE SCALE GENOMIC DNA]</scope>
    <source>
        <strain>ATCC 700392 / 26695</strain>
    </source>
</reference>
<reference key="2">
    <citation type="journal article" date="2003" name="Clin. Diagn. Lab. Immunol.">
        <title>Detection of high titers of antibody against Helicobacter cysteine-rich proteins A, B, C, and E in Helicobacter pylori-infected individuals.</title>
        <authorList>
            <person name="Mittl P.R.E."/>
            <person name="Luethy L."/>
            <person name="Reinhardt C."/>
            <person name="Joller H."/>
        </authorList>
    </citation>
    <scope>ANTIGENICITY</scope>
</reference>
<reference key="3">
    <citation type="journal article" date="2002" name="J. Biol. Chem.">
        <title>The crystal structure of Helicobacter pylori cysteine-rich protein B reveals a novel fold for a penicillin-binding protein.</title>
        <authorList>
            <person name="Luethy L."/>
            <person name="Gruetter M.G."/>
            <person name="Mittl P.R.E."/>
        </authorList>
    </citation>
    <scope>X-RAY CRYSTALLOGRAPHY (1.95 ANGSTROMS)</scope>
    <scope>FUNCTION</scope>
    <scope>CATALYTIC ACTIVITY</scope>
    <scope>BIOPHYSICOCHEMICAL PROPERTIES</scope>
    <scope>DISULFIDE BONDS</scope>
</reference>
<accession>O25103</accession>
<comment type="function">
    <text evidence="1">Hydrolyzes 6-aminopenicillinic acid and 7-aminocephalosporanic acid (ACA) derivatives.</text>
</comment>
<comment type="catalytic activity">
    <reaction evidence="1">
        <text>a beta-lactam + H2O = a substituted beta-amino acid</text>
        <dbReference type="Rhea" id="RHEA:20401"/>
        <dbReference type="ChEBI" id="CHEBI:15377"/>
        <dbReference type="ChEBI" id="CHEBI:35627"/>
        <dbReference type="ChEBI" id="CHEBI:140347"/>
        <dbReference type="EC" id="3.5.2.6"/>
    </reaction>
</comment>
<comment type="biophysicochemical properties">
    <kinetics>
        <KM evidence="1">174 uM for ampicillin</KM>
        <KM evidence="1">126 uM for benzylpenicillin</KM>
        <KM evidence="1">47 uM for amoxicillin</KM>
        <KM evidence="1">53 uM for nitrocefine</KM>
        <text evidence="1">kcat is 0.76 min(-1) with ampicillin as substrate. kcat is 0.68 min(-1) with benzylpenicillin as substrate. kcat is 0.45 min(-1) with amoxicillin as substrate. kcat is 0.45 min(-1) with nitrocefine as substrate.</text>
    </kinetics>
</comment>
<comment type="miscellaneous">
    <text>Antibodies against HcpB are present in sera from human patients infected by Helicobacter pylori.</text>
</comment>
<comment type="similarity">
    <text evidence="2">Belongs to the hcp beta-lactamase family.</text>
</comment>
<gene>
    <name type="primary">hcpB</name>
    <name type="ordered locus">HP_0336</name>
</gene>
<dbReference type="EC" id="3.5.2.6" evidence="1"/>
<dbReference type="EMBL" id="AE000511">
    <property type="protein sequence ID" value="AAD07408.1"/>
    <property type="molecule type" value="Genomic_DNA"/>
</dbReference>
<dbReference type="PIR" id="H64561">
    <property type="entry name" value="H64561"/>
</dbReference>
<dbReference type="RefSeq" id="WP_001862988.1">
    <property type="nucleotide sequence ID" value="NC_018939.1"/>
</dbReference>
<dbReference type="PDB" id="1KLX">
    <property type="method" value="X-ray"/>
    <property type="resolution" value="1.95 A"/>
    <property type="chains" value="A=1-138"/>
</dbReference>
<dbReference type="PDBsum" id="1KLX"/>
<dbReference type="SMR" id="O25103"/>
<dbReference type="DIP" id="DIP-3342N"/>
<dbReference type="IntAct" id="O25103">
    <property type="interactions" value="50"/>
</dbReference>
<dbReference type="MINT" id="O25103"/>
<dbReference type="STRING" id="85962.HP_0336"/>
<dbReference type="EnsemblBacteria" id="AAD07408">
    <property type="protein sequence ID" value="AAD07408"/>
    <property type="gene ID" value="HP_0336"/>
</dbReference>
<dbReference type="KEGG" id="hpy:HP_0336"/>
<dbReference type="InParanoid" id="O25103"/>
<dbReference type="PhylomeDB" id="O25103"/>
<dbReference type="EvolutionaryTrace" id="O25103"/>
<dbReference type="Proteomes" id="UP000000429">
    <property type="component" value="Chromosome"/>
</dbReference>
<dbReference type="GO" id="GO:0008800">
    <property type="term" value="F:beta-lactamase activity"/>
    <property type="evidence" value="ECO:0000314"/>
    <property type="project" value="CACAO"/>
</dbReference>
<dbReference type="GO" id="GO:0046677">
    <property type="term" value="P:response to antibiotic"/>
    <property type="evidence" value="ECO:0007669"/>
    <property type="project" value="UniProtKB-KW"/>
</dbReference>
<dbReference type="Gene3D" id="1.25.40.10">
    <property type="entry name" value="Tetratricopeptide repeat domain"/>
    <property type="match status" value="1"/>
</dbReference>
<dbReference type="InterPro" id="IPR040239">
    <property type="entry name" value="HcpB-like"/>
</dbReference>
<dbReference type="InterPro" id="IPR006597">
    <property type="entry name" value="Sel1-like"/>
</dbReference>
<dbReference type="InterPro" id="IPR011990">
    <property type="entry name" value="TPR-like_helical_dom_sf"/>
</dbReference>
<dbReference type="PANTHER" id="PTHR13891">
    <property type="entry name" value="CYTOCHROME C OXIDASE ASSEMBLY FACTOR 7"/>
    <property type="match status" value="1"/>
</dbReference>
<dbReference type="PANTHER" id="PTHR13891:SF1">
    <property type="entry name" value="CYTOCHROME C OXIDASE ASSEMBLY FACTOR 7"/>
    <property type="match status" value="1"/>
</dbReference>
<dbReference type="Pfam" id="PF08238">
    <property type="entry name" value="Sel1"/>
    <property type="match status" value="4"/>
</dbReference>
<dbReference type="SMART" id="SM00671">
    <property type="entry name" value="SEL1"/>
    <property type="match status" value="3"/>
</dbReference>
<dbReference type="SUPFAM" id="SSF81901">
    <property type="entry name" value="HCP-like"/>
    <property type="match status" value="1"/>
</dbReference>
<name>HCPB_HELPY</name>
<organism>
    <name type="scientific">Helicobacter pylori (strain ATCC 700392 / 26695)</name>
    <name type="common">Campylobacter pylori</name>
    <dbReference type="NCBI Taxonomy" id="85962"/>
    <lineage>
        <taxon>Bacteria</taxon>
        <taxon>Pseudomonadati</taxon>
        <taxon>Campylobacterota</taxon>
        <taxon>Epsilonproteobacteria</taxon>
        <taxon>Campylobacterales</taxon>
        <taxon>Helicobacteraceae</taxon>
        <taxon>Helicobacter</taxon>
    </lineage>
</organism>
<sequence>MVGGGTVKKDLKKAIQYYVKACELNEMFGCLSLVSNSQINKQKLFQYLSKACELNSGNGCRFLGDFYENGKYVKKDLRKAAQYYSKACGLNDQDGCLILGYKQYAGKGVVKNEKQAVKTFEKACRLGSEDACGILNNY</sequence>
<keyword id="KW-0002">3D-structure</keyword>
<keyword id="KW-0046">Antibiotic resistance</keyword>
<keyword id="KW-1015">Disulfide bond</keyword>
<keyword id="KW-0378">Hydrolase</keyword>
<keyword id="KW-1185">Reference proteome</keyword>
<keyword id="KW-0677">Repeat</keyword>
<keyword id="KW-0802">TPR repeat</keyword>
<protein>
    <recommendedName>
        <fullName>Beta-lactamase HcpB</fullName>
        <ecNumber evidence="1">3.5.2.6</ecNumber>
    </recommendedName>
    <alternativeName>
        <fullName>Cysteine-rich protein B</fullName>
    </alternativeName>
</protein>